<protein>
    <recommendedName>
        <fullName evidence="1">Replication factor C large subunit</fullName>
        <shortName evidence="1">RFC large subunit</shortName>
    </recommendedName>
    <alternativeName>
        <fullName evidence="1">Clamp loader large subunit</fullName>
    </alternativeName>
</protein>
<feature type="chain" id="PRO_0000292184" description="Replication factor C large subunit">
    <location>
        <begin position="1"/>
        <end position="467"/>
    </location>
</feature>
<feature type="binding site" evidence="1">
    <location>
        <begin position="47"/>
        <end position="54"/>
    </location>
    <ligand>
        <name>ATP</name>
        <dbReference type="ChEBI" id="CHEBI:30616"/>
    </ligand>
</feature>
<evidence type="ECO:0000255" key="1">
    <source>
        <dbReference type="HAMAP-Rule" id="MF_01508"/>
    </source>
</evidence>
<reference key="1">
    <citation type="submission" date="2006-10" db="EMBL/GenBank/DDBJ databases">
        <title>Complete sequence of Methanosaeta thermophila PT.</title>
        <authorList>
            <consortium name="US DOE Joint Genome Institute"/>
            <person name="Copeland A."/>
            <person name="Lucas S."/>
            <person name="Lapidus A."/>
            <person name="Barry K."/>
            <person name="Detter J.C."/>
            <person name="Glavina del Rio T."/>
            <person name="Hammon N."/>
            <person name="Israni S."/>
            <person name="Pitluck S."/>
            <person name="Chain P."/>
            <person name="Malfatti S."/>
            <person name="Shin M."/>
            <person name="Vergez L."/>
            <person name="Schmutz J."/>
            <person name="Larimer F."/>
            <person name="Land M."/>
            <person name="Hauser L."/>
            <person name="Kyrpides N."/>
            <person name="Kim E."/>
            <person name="Smith K.S."/>
            <person name="Ingram-Smith C."/>
            <person name="Richardson P."/>
        </authorList>
    </citation>
    <scope>NUCLEOTIDE SEQUENCE [LARGE SCALE GENOMIC DNA]</scope>
    <source>
        <strain>DSM 6194 / JCM 14653 / NBRC 101360 / PT</strain>
    </source>
</reference>
<organism>
    <name type="scientific">Methanothrix thermoacetophila (strain DSM 6194 / JCM 14653 / NBRC 101360 / PT)</name>
    <name type="common">Methanosaeta thermophila</name>
    <dbReference type="NCBI Taxonomy" id="349307"/>
    <lineage>
        <taxon>Archaea</taxon>
        <taxon>Methanobacteriati</taxon>
        <taxon>Methanobacteriota</taxon>
        <taxon>Stenosarchaea group</taxon>
        <taxon>Methanomicrobia</taxon>
        <taxon>Methanotrichales</taxon>
        <taxon>Methanotrichaceae</taxon>
        <taxon>Methanothrix</taxon>
    </lineage>
</organism>
<name>RFCL_METTP</name>
<keyword id="KW-0067">ATP-binding</keyword>
<keyword id="KW-0235">DNA replication</keyword>
<keyword id="KW-0547">Nucleotide-binding</keyword>
<keyword id="KW-1185">Reference proteome</keyword>
<gene>
    <name evidence="1" type="primary">rfcL</name>
    <name type="ordered locus">Mthe_0470</name>
</gene>
<comment type="function">
    <text evidence="1">Part of the RFC clamp loader complex which loads the PCNA sliding clamp onto DNA.</text>
</comment>
<comment type="subunit">
    <text evidence="1">Heteromultimer composed of small subunits (RfcS) and large subunits (RfcL).</text>
</comment>
<comment type="similarity">
    <text evidence="1">Belongs to the activator 1 small subunits family. RfcL subfamily.</text>
</comment>
<accession>A0B6D7</accession>
<sequence length="467" mass="52147">MTSWAEKYRPKNLDGILGNAKAVSELRAWAMAWEKGRPEVKCLILYGPPGVGKTSAALALASEMDWDYIELNASDQRTAEIIKSIAGPASQVSTFSGRRRLVILDEADNLHGTYDRGGAAAILRVIKNATQPVILIANEYYNIEKPLRDACRGVQFRSIRAQTIASLLREICRSEGIECEPEAVMHIAAMSGGDLRSAINDLEAAARGLKHLRLEDVATSERDVKASIFRVLDSIFKGEDSRSALEATYQLDESPEDLIHWIDENLPIVYKDRELAKGFECLSRADIFLGRVRRRQNYTLWRYAAFLMTGGVRAVSSKVRRGYTQFRPPSLWKRLGQTRKARSVRDSAARKIAAHCHVSTSYARSELLNFVGALLRSKKTGAAVAASLGLNIEEIALLTGSSPTTKKVQKLFEDAQKIIEAEQIAMIDRGLKIVDREIEKPEDKAMKYASVSKEIVQEKRQRSLFDF</sequence>
<dbReference type="EMBL" id="CP000477">
    <property type="protein sequence ID" value="ABK14261.1"/>
    <property type="molecule type" value="Genomic_DNA"/>
</dbReference>
<dbReference type="RefSeq" id="WP_011695659.1">
    <property type="nucleotide sequence ID" value="NC_008553.1"/>
</dbReference>
<dbReference type="SMR" id="A0B6D7"/>
<dbReference type="STRING" id="349307.Mthe_0470"/>
<dbReference type="GeneID" id="4463087"/>
<dbReference type="KEGG" id="mtp:Mthe_0470"/>
<dbReference type="HOGENOM" id="CLU_027255_1_0_2"/>
<dbReference type="OrthoDB" id="8658at2157"/>
<dbReference type="Proteomes" id="UP000000674">
    <property type="component" value="Chromosome"/>
</dbReference>
<dbReference type="GO" id="GO:0005524">
    <property type="term" value="F:ATP binding"/>
    <property type="evidence" value="ECO:0007669"/>
    <property type="project" value="UniProtKB-UniRule"/>
</dbReference>
<dbReference type="GO" id="GO:0016887">
    <property type="term" value="F:ATP hydrolysis activity"/>
    <property type="evidence" value="ECO:0007669"/>
    <property type="project" value="InterPro"/>
</dbReference>
<dbReference type="GO" id="GO:0003689">
    <property type="term" value="F:DNA clamp loader activity"/>
    <property type="evidence" value="ECO:0007669"/>
    <property type="project" value="UniProtKB-UniRule"/>
</dbReference>
<dbReference type="GO" id="GO:0006260">
    <property type="term" value="P:DNA replication"/>
    <property type="evidence" value="ECO:0007669"/>
    <property type="project" value="UniProtKB-UniRule"/>
</dbReference>
<dbReference type="CDD" id="cd00009">
    <property type="entry name" value="AAA"/>
    <property type="match status" value="1"/>
</dbReference>
<dbReference type="CDD" id="cd18140">
    <property type="entry name" value="HLD_clamp_RFC"/>
    <property type="match status" value="1"/>
</dbReference>
<dbReference type="Gene3D" id="1.10.8.60">
    <property type="match status" value="1"/>
</dbReference>
<dbReference type="Gene3D" id="3.40.50.300">
    <property type="entry name" value="P-loop containing nucleotide triphosphate hydrolases"/>
    <property type="match status" value="1"/>
</dbReference>
<dbReference type="HAMAP" id="MF_01508">
    <property type="entry name" value="RfcL"/>
    <property type="match status" value="1"/>
</dbReference>
<dbReference type="InterPro" id="IPR003593">
    <property type="entry name" value="AAA+_ATPase"/>
</dbReference>
<dbReference type="InterPro" id="IPR003959">
    <property type="entry name" value="ATPase_AAA_core"/>
</dbReference>
<dbReference type="InterPro" id="IPR027417">
    <property type="entry name" value="P-loop_NTPase"/>
</dbReference>
<dbReference type="InterPro" id="IPR023935">
    <property type="entry name" value="Rep_factor-C_lsu"/>
</dbReference>
<dbReference type="InterPro" id="IPR047854">
    <property type="entry name" value="RFC_lid"/>
</dbReference>
<dbReference type="NCBIfam" id="NF003228">
    <property type="entry name" value="PRK04195.1-4"/>
    <property type="match status" value="1"/>
</dbReference>
<dbReference type="NCBIfam" id="NF003229">
    <property type="entry name" value="PRK04195.1-5"/>
    <property type="match status" value="1"/>
</dbReference>
<dbReference type="NCBIfam" id="NF003231">
    <property type="entry name" value="PRK04195.2-1"/>
    <property type="match status" value="1"/>
</dbReference>
<dbReference type="PANTHER" id="PTHR23389">
    <property type="entry name" value="CHROMOSOME TRANSMISSION FIDELITY FACTOR 18"/>
    <property type="match status" value="1"/>
</dbReference>
<dbReference type="PANTHER" id="PTHR23389:SF6">
    <property type="entry name" value="REPLICATION FACTOR C SUBUNIT 1"/>
    <property type="match status" value="1"/>
</dbReference>
<dbReference type="Pfam" id="PF00004">
    <property type="entry name" value="AAA"/>
    <property type="match status" value="1"/>
</dbReference>
<dbReference type="Pfam" id="PF21960">
    <property type="entry name" value="RCF1-5-like_lid"/>
    <property type="match status" value="1"/>
</dbReference>
<dbReference type="SMART" id="SM00382">
    <property type="entry name" value="AAA"/>
    <property type="match status" value="1"/>
</dbReference>
<dbReference type="SUPFAM" id="SSF52540">
    <property type="entry name" value="P-loop containing nucleoside triphosphate hydrolases"/>
    <property type="match status" value="1"/>
</dbReference>
<proteinExistence type="inferred from homology"/>